<protein>
    <recommendedName>
        <fullName>Hemagglutinin</fullName>
    </recommendedName>
    <component>
        <recommendedName>
            <fullName>Hemagglutinin HA1 chain</fullName>
        </recommendedName>
    </component>
</protein>
<sequence>MEKLLLFATIILCVKADEICIGYLSNNSTDKVDTIIENNVTVTSSVELLETEHTGSFCSINGKQPTSLRDCSFAGWILGNPQC</sequence>
<gene>
    <name type="primary">HA</name>
</gene>
<dbReference type="EMBL" id="J02161">
    <property type="protein sequence ID" value="AAA43181.1"/>
    <property type="molecule type" value="Genomic_RNA"/>
</dbReference>
<dbReference type="SMR" id="P04662"/>
<dbReference type="GlyCosmos" id="P04662">
    <property type="glycosylation" value="3 sites, No reported glycans"/>
</dbReference>
<dbReference type="GO" id="GO:0020002">
    <property type="term" value="C:host cell plasma membrane"/>
    <property type="evidence" value="ECO:0007669"/>
    <property type="project" value="UniProtKB-SubCell"/>
</dbReference>
<dbReference type="GO" id="GO:0016020">
    <property type="term" value="C:membrane"/>
    <property type="evidence" value="ECO:0007669"/>
    <property type="project" value="UniProtKB-KW"/>
</dbReference>
<dbReference type="GO" id="GO:0019031">
    <property type="term" value="C:viral envelope"/>
    <property type="evidence" value="ECO:0007669"/>
    <property type="project" value="UniProtKB-KW"/>
</dbReference>
<dbReference type="GO" id="GO:0055036">
    <property type="term" value="C:virion membrane"/>
    <property type="evidence" value="ECO:0007669"/>
    <property type="project" value="UniProtKB-SubCell"/>
</dbReference>
<dbReference type="GO" id="GO:0046789">
    <property type="term" value="F:host cell surface receptor binding"/>
    <property type="evidence" value="ECO:0007669"/>
    <property type="project" value="InterPro"/>
</dbReference>
<dbReference type="GO" id="GO:0075512">
    <property type="term" value="P:clathrin-dependent endocytosis of virus by host cell"/>
    <property type="evidence" value="ECO:0007669"/>
    <property type="project" value="UniProtKB-KW"/>
</dbReference>
<dbReference type="GO" id="GO:0039654">
    <property type="term" value="P:fusion of virus membrane with host endosome membrane"/>
    <property type="evidence" value="ECO:0007669"/>
    <property type="project" value="UniProtKB-KW"/>
</dbReference>
<dbReference type="GO" id="GO:0019064">
    <property type="term" value="P:fusion of virus membrane with host plasma membrane"/>
    <property type="evidence" value="ECO:0007669"/>
    <property type="project" value="InterPro"/>
</dbReference>
<dbReference type="GO" id="GO:0019062">
    <property type="term" value="P:virion attachment to host cell"/>
    <property type="evidence" value="ECO:0007669"/>
    <property type="project" value="UniProtKB-KW"/>
</dbReference>
<dbReference type="Gene3D" id="3.90.209.20">
    <property type="match status" value="1"/>
</dbReference>
<dbReference type="Gene3D" id="2.10.77.10">
    <property type="entry name" value="Hemagglutinin Chain A, Domain 2"/>
    <property type="match status" value="1"/>
</dbReference>
<dbReference type="InterPro" id="IPR008980">
    <property type="entry name" value="Capsid_hemagglutn"/>
</dbReference>
<dbReference type="InterPro" id="IPR013828">
    <property type="entry name" value="Hemagglutn_HA1_a/b_dom_sf"/>
</dbReference>
<dbReference type="InterPro" id="IPR000149">
    <property type="entry name" value="Hemagglutn_influenz_A"/>
</dbReference>
<dbReference type="InterPro" id="IPR001364">
    <property type="entry name" value="Hemagglutn_influenz_A/B"/>
</dbReference>
<dbReference type="Pfam" id="PF00509">
    <property type="entry name" value="Hemagglutinin"/>
    <property type="match status" value="1"/>
</dbReference>
<dbReference type="PRINTS" id="PR00330">
    <property type="entry name" value="HEMAGGLUTN1"/>
</dbReference>
<dbReference type="SUPFAM" id="SSF49818">
    <property type="entry name" value="Viral protein domain"/>
    <property type="match status" value="1"/>
</dbReference>
<organism>
    <name type="scientific">Influenza A virus (strain A/Tern/Australia/G70C/1975 H11N9)</name>
    <dbReference type="NCBI Taxonomy" id="384509"/>
    <lineage>
        <taxon>Viruses</taxon>
        <taxon>Riboviria</taxon>
        <taxon>Orthornavirae</taxon>
        <taxon>Negarnaviricota</taxon>
        <taxon>Polyploviricotina</taxon>
        <taxon>Insthoviricetes</taxon>
        <taxon>Articulavirales</taxon>
        <taxon>Orthomyxoviridae</taxon>
        <taxon>Alphainfluenzavirus</taxon>
        <taxon>Alphainfluenzavirus influenzae</taxon>
        <taxon>Influenza A virus</taxon>
    </lineage>
</organism>
<keyword id="KW-1167">Clathrin- and caveolin-independent endocytosis of virus by host</keyword>
<keyword id="KW-1165">Clathrin-mediated endocytosis of virus by host</keyword>
<keyword id="KW-1015">Disulfide bond</keyword>
<keyword id="KW-1170">Fusion of virus membrane with host endosomal membrane</keyword>
<keyword id="KW-1168">Fusion of virus membrane with host membrane</keyword>
<keyword id="KW-0325">Glycoprotein</keyword>
<keyword id="KW-0348">Hemagglutinin</keyword>
<keyword id="KW-1032">Host cell membrane</keyword>
<keyword id="KW-1043">Host membrane</keyword>
<keyword id="KW-0945">Host-virus interaction</keyword>
<keyword id="KW-0449">Lipoprotein</keyword>
<keyword id="KW-0472">Membrane</keyword>
<keyword id="KW-0564">Palmitate</keyword>
<keyword id="KW-0732">Signal</keyword>
<keyword id="KW-0812">Transmembrane</keyword>
<keyword id="KW-1161">Viral attachment to host cell</keyword>
<keyword id="KW-0261">Viral envelope protein</keyword>
<keyword id="KW-1162">Viral penetration into host cytoplasm</keyword>
<keyword id="KW-0946">Virion</keyword>
<keyword id="KW-1164">Virus endocytosis by host</keyword>
<keyword id="KW-1160">Virus entry into host cell</keyword>
<feature type="signal peptide" evidence="2">
    <location>
        <begin position="1"/>
        <end position="16"/>
    </location>
</feature>
<feature type="chain" id="PRO_0000039060" description="Hemagglutinin HA1 chain">
    <location>
        <begin position="17"/>
        <end position="83" status="greater than"/>
    </location>
</feature>
<feature type="glycosylation site" description="N-linked (GlcNAc...) asparagine; by host" evidence="2">
    <location>
        <position position="26"/>
    </location>
</feature>
<feature type="glycosylation site" description="N-linked (GlcNAc...) asparagine; by host" evidence="2">
    <location>
        <position position="27"/>
    </location>
</feature>
<feature type="glycosylation site" description="N-linked (GlcNAc...) asparagine; by host" evidence="2">
    <location>
        <position position="39"/>
    </location>
</feature>
<feature type="disulfide bond" evidence="1">
    <location>
        <begin position="71"/>
        <end position="83"/>
    </location>
</feature>
<feature type="non-terminal residue">
    <location>
        <position position="83"/>
    </location>
</feature>
<proteinExistence type="inferred from homology"/>
<comment type="function">
    <text>Binds to sialic acid-containing receptors on the cell surface, bringing about the attachment of the virus particle to the cell. This attachment induces virion internalization of about two third of the virus particles through clathrin-dependent endocytosis and about one third through a clathrin- and caveolin-independent pathway. Plays a major role in the determination of host range restriction and virulence. Class I viral fusion protein. Responsible for penetration of the virus into the cell cytoplasm by mediating the fusion of the membrane of the endocytosed virus particle with the endosomal membrane. Low pH in endosomes induces an irreversible conformational change in HA2, releasing the fusion hydrophobic peptide. Several trimers are required to form a competent fusion pore.</text>
</comment>
<comment type="subunit">
    <text>Homotrimer of disulfide-linked HA1-HA2.</text>
</comment>
<comment type="subcellular location">
    <subcellularLocation>
        <location evidence="3">Virion membrane</location>
        <topology evidence="3">Single-pass type I membrane protein</topology>
    </subcellularLocation>
    <subcellularLocation>
        <location>Host apical cell membrane</location>
        <topology>Single-pass type I membrane protein</topology>
    </subcellularLocation>
    <text>Targeted to the apical plasma membrane in epithelial polarized cells through a signal present in the transmembrane domain. Associated with glycosphingolipid- and cholesterol-enriched detergent-resistant lipid rafts.</text>
</comment>
<comment type="PTM">
    <text evidence="1">In natural infection, inactive HA is matured into HA1 and HA2 outside the cell by one or more trypsin-like, arginine-specific endoprotease secreted by the bronchial epithelial cells. One identified protease that may be involved in this process is secreted in lungs by club cells (By similarity).</text>
</comment>
<comment type="PTM">
    <text evidence="1">Palmitoylated.</text>
</comment>
<comment type="miscellaneous">
    <text>Major glycoprotein, comprises over 80% of the envelope proteins present in virus particle.</text>
</comment>
<comment type="miscellaneous">
    <text>The extent of infection into host organism is determined by HA. Influenza viruses bud from the apical surface of polarized epithelial cells (e.g. bronchial epithelial cells) into lumen of lungs and are therefore usually pneumotropic. The reason is that HA is cleaved by tryptase clara which is restricted to lungs. However, HAs of H5 and H7 pantropic avian viruses subtypes can be cleaved by furin and subtilisin-type enzymes, allowing the virus to grow in other organs than lungs.</text>
</comment>
<comment type="miscellaneous">
    <text>The influenza A genome consist of 8 RNA segments. Genetic variation of hemagglutinin and/or neuraminidase genes results in the emergence of new influenza strains. The mechanism of variation can be the result of point mutations or the result of genetic reassortment between segments of two different strains.</text>
</comment>
<comment type="similarity">
    <text evidence="3">Belongs to the influenza viruses hemagglutinin family.</text>
</comment>
<name>HEMA_I75A5</name>
<organismHost>
    <name type="scientific">Aves</name>
    <dbReference type="NCBI Taxonomy" id="8782"/>
</organismHost>
<accession>P04662</accession>
<reference key="1">
    <citation type="journal article" date="1981" name="Proc. Natl. Acad. Sci. U.S.A.">
        <title>Sequence relationships among the hemagglutinin genes of 12 subtypes of influenza A virus.</title>
        <authorList>
            <person name="Air G.M."/>
        </authorList>
    </citation>
    <scope>NUCLEOTIDE SEQUENCE [GENOMIC RNA]</scope>
</reference>
<evidence type="ECO:0000250" key="1"/>
<evidence type="ECO:0000255" key="2"/>
<evidence type="ECO:0000305" key="3"/>